<comment type="function">
    <text evidence="1">Catalyzes the synthesis of 5,6-dihydrouridine (D), a modified base found in the D-loop of most tRNAs, via the reduction of the C5-C6 double bond in target uridines. Specifically modifies U16 in tRNAs.</text>
</comment>
<comment type="catalytic activity">
    <reaction evidence="1">
        <text>5,6-dihydrouridine(16) in tRNA + NADP(+) = uridine(16) in tRNA + NADPH + H(+)</text>
        <dbReference type="Rhea" id="RHEA:53376"/>
        <dbReference type="Rhea" id="RHEA-COMP:13543"/>
        <dbReference type="Rhea" id="RHEA-COMP:13544"/>
        <dbReference type="ChEBI" id="CHEBI:15378"/>
        <dbReference type="ChEBI" id="CHEBI:57783"/>
        <dbReference type="ChEBI" id="CHEBI:58349"/>
        <dbReference type="ChEBI" id="CHEBI:65315"/>
        <dbReference type="ChEBI" id="CHEBI:74443"/>
    </reaction>
</comment>
<comment type="catalytic activity">
    <reaction evidence="1">
        <text>5,6-dihydrouridine(16) in tRNA + NAD(+) = uridine(16) in tRNA + NADH + H(+)</text>
        <dbReference type="Rhea" id="RHEA:53380"/>
        <dbReference type="Rhea" id="RHEA-COMP:13543"/>
        <dbReference type="Rhea" id="RHEA-COMP:13544"/>
        <dbReference type="ChEBI" id="CHEBI:15378"/>
        <dbReference type="ChEBI" id="CHEBI:57540"/>
        <dbReference type="ChEBI" id="CHEBI:57945"/>
        <dbReference type="ChEBI" id="CHEBI:65315"/>
        <dbReference type="ChEBI" id="CHEBI:74443"/>
    </reaction>
</comment>
<comment type="cofactor">
    <cofactor evidence="1">
        <name>FMN</name>
        <dbReference type="ChEBI" id="CHEBI:58210"/>
    </cofactor>
</comment>
<comment type="similarity">
    <text evidence="1">Belongs to the Dus family. DusC subfamily.</text>
</comment>
<keyword id="KW-0285">Flavoprotein</keyword>
<keyword id="KW-0288">FMN</keyword>
<keyword id="KW-0521">NADP</keyword>
<keyword id="KW-0560">Oxidoreductase</keyword>
<keyword id="KW-1185">Reference proteome</keyword>
<keyword id="KW-0694">RNA-binding</keyword>
<keyword id="KW-0819">tRNA processing</keyword>
<keyword id="KW-0820">tRNA-binding</keyword>
<reference key="1">
    <citation type="journal article" date="2001" name="Nature">
        <title>Complete genome sequence of Salmonella enterica serovar Typhimurium LT2.</title>
        <authorList>
            <person name="McClelland M."/>
            <person name="Sanderson K.E."/>
            <person name="Spieth J."/>
            <person name="Clifton S.W."/>
            <person name="Latreille P."/>
            <person name="Courtney L."/>
            <person name="Porwollik S."/>
            <person name="Ali J."/>
            <person name="Dante M."/>
            <person name="Du F."/>
            <person name="Hou S."/>
            <person name="Layman D."/>
            <person name="Leonard S."/>
            <person name="Nguyen C."/>
            <person name="Scott K."/>
            <person name="Holmes A."/>
            <person name="Grewal N."/>
            <person name="Mulvaney E."/>
            <person name="Ryan E."/>
            <person name="Sun H."/>
            <person name="Florea L."/>
            <person name="Miller W."/>
            <person name="Stoneking T."/>
            <person name="Nhan M."/>
            <person name="Waterston R."/>
            <person name="Wilson R.K."/>
        </authorList>
    </citation>
    <scope>NUCLEOTIDE SEQUENCE [LARGE SCALE GENOMIC DNA]</scope>
    <source>
        <strain>LT2 / SGSC1412 / ATCC 700720</strain>
    </source>
</reference>
<dbReference type="EC" id="1.3.1.-" evidence="1"/>
<dbReference type="EMBL" id="AE006468">
    <property type="protein sequence ID" value="AAL21078.1"/>
    <property type="molecule type" value="Genomic_DNA"/>
</dbReference>
<dbReference type="RefSeq" id="WP_001264832.1">
    <property type="nucleotide sequence ID" value="NC_003197.2"/>
</dbReference>
<dbReference type="SMR" id="Q8ZNM4"/>
<dbReference type="STRING" id="99287.STM2174"/>
<dbReference type="PaxDb" id="99287-STM2174"/>
<dbReference type="KEGG" id="stm:STM2174"/>
<dbReference type="PATRIC" id="fig|99287.12.peg.2301"/>
<dbReference type="HOGENOM" id="CLU_013299_0_4_6"/>
<dbReference type="OMA" id="YRPPAHW"/>
<dbReference type="PhylomeDB" id="Q8ZNM4"/>
<dbReference type="BioCyc" id="SENT99287:STM2174-MONOMER"/>
<dbReference type="Proteomes" id="UP000001014">
    <property type="component" value="Chromosome"/>
</dbReference>
<dbReference type="GO" id="GO:0050660">
    <property type="term" value="F:flavin adenine dinucleotide binding"/>
    <property type="evidence" value="ECO:0007669"/>
    <property type="project" value="InterPro"/>
</dbReference>
<dbReference type="GO" id="GO:0010181">
    <property type="term" value="F:FMN binding"/>
    <property type="evidence" value="ECO:0007669"/>
    <property type="project" value="UniProtKB-UniRule"/>
</dbReference>
<dbReference type="GO" id="GO:0000049">
    <property type="term" value="F:tRNA binding"/>
    <property type="evidence" value="ECO:0007669"/>
    <property type="project" value="UniProtKB-UniRule"/>
</dbReference>
<dbReference type="GO" id="GO:0102262">
    <property type="term" value="F:tRNA-dihydrouridine16 synthase activity"/>
    <property type="evidence" value="ECO:0007669"/>
    <property type="project" value="RHEA"/>
</dbReference>
<dbReference type="CDD" id="cd02801">
    <property type="entry name" value="DUS_like_FMN"/>
    <property type="match status" value="1"/>
</dbReference>
<dbReference type="Gene3D" id="3.20.20.70">
    <property type="entry name" value="Aldolase class I"/>
    <property type="match status" value="1"/>
</dbReference>
<dbReference type="Gene3D" id="1.20.225.30">
    <property type="entry name" value="Dihydrouridine synthase, C-terminal recognition domain"/>
    <property type="match status" value="1"/>
</dbReference>
<dbReference type="HAMAP" id="MF_02043">
    <property type="entry name" value="DusC_subfam"/>
    <property type="match status" value="1"/>
</dbReference>
<dbReference type="InterPro" id="IPR013785">
    <property type="entry name" value="Aldolase_TIM"/>
</dbReference>
<dbReference type="InterPro" id="IPR035587">
    <property type="entry name" value="DUS-like_FMN-bd"/>
</dbReference>
<dbReference type="InterPro" id="IPR001269">
    <property type="entry name" value="DUS_fam"/>
</dbReference>
<dbReference type="InterPro" id="IPR032886">
    <property type="entry name" value="DusC"/>
</dbReference>
<dbReference type="InterPro" id="IPR042270">
    <property type="entry name" value="DusC_C"/>
</dbReference>
<dbReference type="InterPro" id="IPR018517">
    <property type="entry name" value="tRNA_hU_synthase_CS"/>
</dbReference>
<dbReference type="NCBIfam" id="NF007838">
    <property type="entry name" value="PRK10550.1"/>
    <property type="match status" value="1"/>
</dbReference>
<dbReference type="PANTHER" id="PTHR11082">
    <property type="entry name" value="TRNA-DIHYDROURIDINE SYNTHASE"/>
    <property type="match status" value="1"/>
</dbReference>
<dbReference type="PANTHER" id="PTHR11082:SF26">
    <property type="entry name" value="TRNA-DIHYDROURIDINE(16) SYNTHASE"/>
    <property type="match status" value="1"/>
</dbReference>
<dbReference type="Pfam" id="PF01207">
    <property type="entry name" value="Dus"/>
    <property type="match status" value="1"/>
</dbReference>
<dbReference type="PIRSF" id="PIRSF006621">
    <property type="entry name" value="Dus"/>
    <property type="match status" value="1"/>
</dbReference>
<dbReference type="SUPFAM" id="SSF51395">
    <property type="entry name" value="FMN-linked oxidoreductases"/>
    <property type="match status" value="1"/>
</dbReference>
<dbReference type="PROSITE" id="PS01136">
    <property type="entry name" value="UPF0034"/>
    <property type="match status" value="1"/>
</dbReference>
<feature type="chain" id="PRO_0000162123" description="tRNA-dihydrouridine(16) synthase">
    <location>
        <begin position="1"/>
        <end position="312"/>
    </location>
</feature>
<feature type="active site" description="Proton donor" evidence="1">
    <location>
        <position position="98"/>
    </location>
</feature>
<feature type="binding site" evidence="1">
    <location>
        <begin position="7"/>
        <end position="9"/>
    </location>
    <ligand>
        <name>FMN</name>
        <dbReference type="ChEBI" id="CHEBI:58210"/>
    </ligand>
</feature>
<feature type="binding site" evidence="1">
    <location>
        <position position="68"/>
    </location>
    <ligand>
        <name>FMN</name>
        <dbReference type="ChEBI" id="CHEBI:58210"/>
    </ligand>
</feature>
<feature type="binding site" evidence="1">
    <location>
        <position position="139"/>
    </location>
    <ligand>
        <name>FMN</name>
        <dbReference type="ChEBI" id="CHEBI:58210"/>
    </ligand>
</feature>
<feature type="binding site" evidence="1">
    <location>
        <begin position="200"/>
        <end position="202"/>
    </location>
    <ligand>
        <name>FMN</name>
        <dbReference type="ChEBI" id="CHEBI:58210"/>
    </ligand>
</feature>
<feature type="binding site" evidence="1">
    <location>
        <begin position="224"/>
        <end position="225"/>
    </location>
    <ligand>
        <name>FMN</name>
        <dbReference type="ChEBI" id="CHEBI:58210"/>
    </ligand>
</feature>
<feature type="site" description="Interacts with tRNA; defines subfamily-specific binding signature" evidence="1">
    <location>
        <position position="35"/>
    </location>
</feature>
<feature type="site" description="Interacts with tRNA" evidence="1">
    <location>
        <position position="95"/>
    </location>
</feature>
<feature type="site" description="Interacts with tRNA" evidence="1">
    <location>
        <position position="176"/>
    </location>
</feature>
<feature type="site" description="Interacts with tRNA; defines subfamily-specific binding signature" evidence="1">
    <location>
        <position position="272"/>
    </location>
</feature>
<feature type="site" description="Interacts with tRNA; defines subfamily-specific binding signature" evidence="1">
    <location>
        <position position="274"/>
    </location>
</feature>
<feature type="site" description="Interacts with tRNA" evidence="1">
    <location>
        <position position="279"/>
    </location>
</feature>
<feature type="site" description="Interacts with tRNA; defines subfamily-specific binding signature" evidence="1">
    <location>
        <position position="295"/>
    </location>
</feature>
<organism>
    <name type="scientific">Salmonella typhimurium (strain LT2 / SGSC1412 / ATCC 700720)</name>
    <dbReference type="NCBI Taxonomy" id="99287"/>
    <lineage>
        <taxon>Bacteria</taxon>
        <taxon>Pseudomonadati</taxon>
        <taxon>Pseudomonadota</taxon>
        <taxon>Gammaproteobacteria</taxon>
        <taxon>Enterobacterales</taxon>
        <taxon>Enterobacteriaceae</taxon>
        <taxon>Salmonella</taxon>
    </lineage>
</organism>
<protein>
    <recommendedName>
        <fullName evidence="1">tRNA-dihydrouridine(16) synthase</fullName>
        <ecNumber evidence="1">1.3.1.-</ecNumber>
    </recommendedName>
    <alternativeName>
        <fullName evidence="1">U16-specific dihydrouridine synthase</fullName>
        <shortName evidence="1">U16-specific Dus</shortName>
    </alternativeName>
    <alternativeName>
        <fullName evidence="1">tRNA-dihydrouridine synthase C</fullName>
    </alternativeName>
</protein>
<gene>
    <name evidence="1" type="primary">dusC</name>
    <name type="ordered locus">STM2174</name>
</gene>
<accession>Q8ZNM4</accession>
<evidence type="ECO:0000255" key="1">
    <source>
        <dbReference type="HAMAP-Rule" id="MF_02043"/>
    </source>
</evidence>
<sequence length="312" mass="34518">MRVLLAPMEGVLDALVRELLTEVNDYDLCITEFVRVVDQLLPVKVFHRICPELHHASRTPSGTPVRIQLLGQHPQWLAENAARATALGSYGVDLNCGCPSKVVNGSGGGATLLKDPELIYQGAKAMRAAVPSHLPVTVKVRLGWDSGDRKFEIADAVQQAGASELVVHGRTKAQGYRAEHIDWQAIGEIRQRLTIPVIANGEILDWQSAQACMATSGCDAVMIGRGALNIPNLSRVVKYNEPRMPWPEVVTLLQKYTRLEKQGDTGLYHVARIKQWLGYLRKEYIEATELFQSIRALNRSSEIARAIQAIKI</sequence>
<proteinExistence type="inferred from homology"/>
<name>DUSC_SALTY</name>